<reference key="1">
    <citation type="journal article" date="2004" name="J. Mol. Microbiol. Biotechnol.">
        <title>The complete genome sequence of Bacillus licheniformis DSM13, an organism with great industrial potential.</title>
        <authorList>
            <person name="Veith B."/>
            <person name="Herzberg C."/>
            <person name="Steckel S."/>
            <person name="Feesche J."/>
            <person name="Maurer K.H."/>
            <person name="Ehrenreich P."/>
            <person name="Baeumer S."/>
            <person name="Henne A."/>
            <person name="Liesegang H."/>
            <person name="Merkl R."/>
            <person name="Ehrenreich A."/>
            <person name="Gottschalk G."/>
        </authorList>
    </citation>
    <scope>NUCLEOTIDE SEQUENCE [LARGE SCALE GENOMIC DNA]</scope>
    <source>
        <strain>ATCC 14580 / DSM 13 / JCM 2505 / CCUG 7422 / NBRC 12200 / NCIMB 9375 / NCTC 10341 / NRRL NRS-1264 / Gibson 46</strain>
    </source>
</reference>
<reference key="2">
    <citation type="journal article" date="2004" name="Genome Biol.">
        <title>Complete genome sequence of the industrial bacterium Bacillus licheniformis and comparisons with closely related Bacillus species.</title>
        <authorList>
            <person name="Rey M.W."/>
            <person name="Ramaiya P."/>
            <person name="Nelson B.A."/>
            <person name="Brody-Karpin S.D."/>
            <person name="Zaretsky E.J."/>
            <person name="Tang M."/>
            <person name="Lopez de Leon A."/>
            <person name="Xiang H."/>
            <person name="Gusti V."/>
            <person name="Clausen I.G."/>
            <person name="Olsen P.B."/>
            <person name="Rasmussen M.D."/>
            <person name="Andersen J.T."/>
            <person name="Joergensen P.L."/>
            <person name="Larsen T.S."/>
            <person name="Sorokin A."/>
            <person name="Bolotin A."/>
            <person name="Lapidus A."/>
            <person name="Galleron N."/>
            <person name="Ehrlich S.D."/>
            <person name="Berka R.M."/>
        </authorList>
    </citation>
    <scope>NUCLEOTIDE SEQUENCE [LARGE SCALE GENOMIC DNA]</scope>
    <source>
        <strain>ATCC 14580 / DSM 13 / JCM 2505 / CCUG 7422 / NBRC 12200 / NCIMB 9375 / NCTC 10341 / NRRL NRS-1264 / Gibson 46</strain>
    </source>
</reference>
<evidence type="ECO:0000255" key="1">
    <source>
        <dbReference type="HAMAP-Rule" id="MF_01506"/>
    </source>
</evidence>
<evidence type="ECO:0000256" key="2">
    <source>
        <dbReference type="SAM" id="MobiDB-lite"/>
    </source>
</evidence>
<organism>
    <name type="scientific">Bacillus licheniformis (strain ATCC 14580 / DSM 13 / JCM 2505 / CCUG 7422 / NBRC 12200 / NCIMB 9375 / NCTC 10341 / NRRL NRS-1264 / Gibson 46)</name>
    <dbReference type="NCBI Taxonomy" id="279010"/>
    <lineage>
        <taxon>Bacteria</taxon>
        <taxon>Bacillati</taxon>
        <taxon>Bacillota</taxon>
        <taxon>Bacilli</taxon>
        <taxon>Bacillales</taxon>
        <taxon>Bacillaceae</taxon>
        <taxon>Bacillus</taxon>
    </lineage>
</organism>
<sequence>MTHQKHHPDDRSDNVEKLQDMVQNTIENIEESEEQLSFASEAEQEQIREKNERRNESIEAMRNEIHDEAEARKNGYHQ</sequence>
<accession>Q65J23</accession>
<keyword id="KW-1185">Reference proteome</keyword>
<keyword id="KW-0749">Sporulation</keyword>
<gene>
    <name evidence="1" type="primary">tlp</name>
    <name type="ordered locus">BLi02051</name>
    <name type="ordered locus">BL02944</name>
</gene>
<protein>
    <recommendedName>
        <fullName evidence="1">Small, acid-soluble spore protein Tlp</fullName>
    </recommendedName>
</protein>
<proteinExistence type="inferred from homology"/>
<comment type="subcellular location">
    <subcellularLocation>
        <location evidence="1">Spore core</location>
    </subcellularLocation>
</comment>
<comment type="induction">
    <text evidence="1">Expressed only in the forespore compartment of sporulating cells.</text>
</comment>
<comment type="similarity">
    <text evidence="1">Belongs to the Tlp family.</text>
</comment>
<dbReference type="EMBL" id="AE017333">
    <property type="protein sequence ID" value="AAU40941.1"/>
    <property type="molecule type" value="Genomic_DNA"/>
</dbReference>
<dbReference type="EMBL" id="CP000002">
    <property type="protein sequence ID" value="AAU23579.1"/>
    <property type="molecule type" value="Genomic_DNA"/>
</dbReference>
<dbReference type="RefSeq" id="WP_003182262.1">
    <property type="nucleotide sequence ID" value="NC_006322.1"/>
</dbReference>
<dbReference type="SMR" id="Q65J23"/>
<dbReference type="STRING" id="279010.BL02944"/>
<dbReference type="GeneID" id="92861358"/>
<dbReference type="KEGG" id="bld:BLi02051"/>
<dbReference type="KEGG" id="bli:BL02944"/>
<dbReference type="eggNOG" id="ENOG50330RR">
    <property type="taxonomic scope" value="Bacteria"/>
</dbReference>
<dbReference type="HOGENOM" id="CLU_178266_1_0_9"/>
<dbReference type="Proteomes" id="UP000000606">
    <property type="component" value="Chromosome"/>
</dbReference>
<dbReference type="GO" id="GO:0030436">
    <property type="term" value="P:asexual sporulation"/>
    <property type="evidence" value="ECO:0007669"/>
    <property type="project" value="UniProtKB-UniRule"/>
</dbReference>
<dbReference type="GO" id="GO:0030435">
    <property type="term" value="P:sporulation resulting in formation of a cellular spore"/>
    <property type="evidence" value="ECO:0007669"/>
    <property type="project" value="UniProtKB-KW"/>
</dbReference>
<dbReference type="HAMAP" id="MF_01506">
    <property type="entry name" value="Tlp"/>
    <property type="match status" value="1"/>
</dbReference>
<dbReference type="InterPro" id="IPR017524">
    <property type="entry name" value="SASP_thioredoxin-like"/>
</dbReference>
<dbReference type="NCBIfam" id="TIGR03090">
    <property type="entry name" value="SASP_tlp"/>
    <property type="match status" value="1"/>
</dbReference>
<dbReference type="Pfam" id="PF19824">
    <property type="entry name" value="Tlp"/>
    <property type="match status" value="1"/>
</dbReference>
<feature type="chain" id="PRO_0000221500" description="Small, acid-soluble spore protein Tlp">
    <location>
        <begin position="1"/>
        <end position="78"/>
    </location>
</feature>
<feature type="region of interest" description="Disordered" evidence="2">
    <location>
        <begin position="32"/>
        <end position="78"/>
    </location>
</feature>
<feature type="compositionally biased region" description="Basic and acidic residues" evidence="2">
    <location>
        <begin position="45"/>
        <end position="78"/>
    </location>
</feature>
<name>TLP_BACLD</name>